<dbReference type="EMBL" id="AL111168">
    <property type="protein sequence ID" value="CAL34481.1"/>
    <property type="molecule type" value="Genomic_DNA"/>
</dbReference>
<dbReference type="PIR" id="F81452">
    <property type="entry name" value="F81452"/>
</dbReference>
<dbReference type="RefSeq" id="WP_002858674.1">
    <property type="nucleotide sequence ID" value="NZ_SZUC01000004.1"/>
</dbReference>
<dbReference type="RefSeq" id="YP_002343768.1">
    <property type="nucleotide sequence ID" value="NC_002163.1"/>
</dbReference>
<dbReference type="SMR" id="Q9PIG9"/>
<dbReference type="IntAct" id="Q9PIG9">
    <property type="interactions" value="1"/>
</dbReference>
<dbReference type="STRING" id="192222.Cj0330c"/>
<dbReference type="PaxDb" id="192222-Cj0330c"/>
<dbReference type="EnsemblBacteria" id="CAL34481">
    <property type="protein sequence ID" value="CAL34481"/>
    <property type="gene ID" value="Cj0330c"/>
</dbReference>
<dbReference type="GeneID" id="904654"/>
<dbReference type="KEGG" id="cje:Cj0330c"/>
<dbReference type="PATRIC" id="fig|192222.6.peg.322"/>
<dbReference type="eggNOG" id="COG0333">
    <property type="taxonomic scope" value="Bacteria"/>
</dbReference>
<dbReference type="HOGENOM" id="CLU_129084_1_2_7"/>
<dbReference type="OrthoDB" id="9801927at2"/>
<dbReference type="Proteomes" id="UP000000799">
    <property type="component" value="Chromosome"/>
</dbReference>
<dbReference type="GO" id="GO:0015934">
    <property type="term" value="C:large ribosomal subunit"/>
    <property type="evidence" value="ECO:0007669"/>
    <property type="project" value="InterPro"/>
</dbReference>
<dbReference type="GO" id="GO:0003735">
    <property type="term" value="F:structural constituent of ribosome"/>
    <property type="evidence" value="ECO:0007669"/>
    <property type="project" value="InterPro"/>
</dbReference>
<dbReference type="GO" id="GO:0006412">
    <property type="term" value="P:translation"/>
    <property type="evidence" value="ECO:0007669"/>
    <property type="project" value="UniProtKB-UniRule"/>
</dbReference>
<dbReference type="HAMAP" id="MF_00340">
    <property type="entry name" value="Ribosomal_bL32"/>
    <property type="match status" value="1"/>
</dbReference>
<dbReference type="InterPro" id="IPR002677">
    <property type="entry name" value="Ribosomal_bL32"/>
</dbReference>
<dbReference type="InterPro" id="IPR011332">
    <property type="entry name" value="Ribosomal_zn-bd"/>
</dbReference>
<dbReference type="NCBIfam" id="TIGR01031">
    <property type="entry name" value="rpmF_bact"/>
    <property type="match status" value="1"/>
</dbReference>
<dbReference type="Pfam" id="PF01783">
    <property type="entry name" value="Ribosomal_L32p"/>
    <property type="match status" value="1"/>
</dbReference>
<dbReference type="SUPFAM" id="SSF57829">
    <property type="entry name" value="Zn-binding ribosomal proteins"/>
    <property type="match status" value="1"/>
</dbReference>
<organism>
    <name type="scientific">Campylobacter jejuni subsp. jejuni serotype O:2 (strain ATCC 700819 / NCTC 11168)</name>
    <dbReference type="NCBI Taxonomy" id="192222"/>
    <lineage>
        <taxon>Bacteria</taxon>
        <taxon>Pseudomonadati</taxon>
        <taxon>Campylobacterota</taxon>
        <taxon>Epsilonproteobacteria</taxon>
        <taxon>Campylobacterales</taxon>
        <taxon>Campylobacteraceae</taxon>
        <taxon>Campylobacter</taxon>
    </lineage>
</organism>
<accession>Q9PIG9</accession>
<accession>Q0PBH9</accession>
<gene>
    <name type="primary">rpmF</name>
    <name type="ordered locus">Cj0330c</name>
</gene>
<comment type="similarity">
    <text evidence="3">Belongs to the bacterial ribosomal protein bL32 family.</text>
</comment>
<reference key="1">
    <citation type="journal article" date="2000" name="Nature">
        <title>The genome sequence of the food-borne pathogen Campylobacter jejuni reveals hypervariable sequences.</title>
        <authorList>
            <person name="Parkhill J."/>
            <person name="Wren B.W."/>
            <person name="Mungall K.L."/>
            <person name="Ketley J.M."/>
            <person name="Churcher C.M."/>
            <person name="Basham D."/>
            <person name="Chillingworth T."/>
            <person name="Davies R.M."/>
            <person name="Feltwell T."/>
            <person name="Holroyd S."/>
            <person name="Jagels K."/>
            <person name="Karlyshev A.V."/>
            <person name="Moule S."/>
            <person name="Pallen M.J."/>
            <person name="Penn C.W."/>
            <person name="Quail M.A."/>
            <person name="Rajandream M.A."/>
            <person name="Rutherford K.M."/>
            <person name="van Vliet A.H.M."/>
            <person name="Whitehead S."/>
            <person name="Barrell B.G."/>
        </authorList>
    </citation>
    <scope>NUCLEOTIDE SEQUENCE [LARGE SCALE GENOMIC DNA]</scope>
    <source>
        <strain>ATCC 700819 / NCTC 11168</strain>
    </source>
</reference>
<evidence type="ECO:0000250" key="1"/>
<evidence type="ECO:0000256" key="2">
    <source>
        <dbReference type="SAM" id="MobiDB-lite"/>
    </source>
</evidence>
<evidence type="ECO:0000305" key="3"/>
<feature type="initiator methionine" description="Removed" evidence="1">
    <location>
        <position position="1"/>
    </location>
</feature>
<feature type="chain" id="PRO_0000172322" description="Large ribosomal subunit protein bL32">
    <location>
        <begin position="2"/>
        <end position="48"/>
    </location>
</feature>
<feature type="region of interest" description="Disordered" evidence="2">
    <location>
        <begin position="1"/>
        <end position="48"/>
    </location>
</feature>
<feature type="compositionally biased region" description="Basic residues" evidence="2">
    <location>
        <begin position="1"/>
        <end position="20"/>
    </location>
</feature>
<protein>
    <recommendedName>
        <fullName evidence="3">Large ribosomal subunit protein bL32</fullName>
    </recommendedName>
    <alternativeName>
        <fullName>50S ribosomal protein L32</fullName>
    </alternativeName>
</protein>
<proteinExistence type="inferred from homology"/>
<sequence>MAVPKRRVSKTRAAKRRTHYKVSLPMPIKDKDGSYKMPHRANPTTKEY</sequence>
<name>RL32_CAMJE</name>
<keyword id="KW-1185">Reference proteome</keyword>
<keyword id="KW-0687">Ribonucleoprotein</keyword>
<keyword id="KW-0689">Ribosomal protein</keyword>